<dbReference type="EC" id="5.3.1.5" evidence="1"/>
<dbReference type="EMBL" id="CP000633">
    <property type="protein sequence ID" value="ACM37759.1"/>
    <property type="molecule type" value="Genomic_DNA"/>
</dbReference>
<dbReference type="RefSeq" id="WP_015917171.1">
    <property type="nucleotide sequence ID" value="NC_011989.1"/>
</dbReference>
<dbReference type="SMR" id="B9JSR6"/>
<dbReference type="STRING" id="311402.Avi_3832"/>
<dbReference type="KEGG" id="avi:Avi_3832"/>
<dbReference type="eggNOG" id="COG2115">
    <property type="taxonomic scope" value="Bacteria"/>
</dbReference>
<dbReference type="HOGENOM" id="CLU_037261_1_0_5"/>
<dbReference type="Proteomes" id="UP000001596">
    <property type="component" value="Chromosome 1"/>
</dbReference>
<dbReference type="GO" id="GO:0005737">
    <property type="term" value="C:cytoplasm"/>
    <property type="evidence" value="ECO:0007669"/>
    <property type="project" value="UniProtKB-SubCell"/>
</dbReference>
<dbReference type="GO" id="GO:0000287">
    <property type="term" value="F:magnesium ion binding"/>
    <property type="evidence" value="ECO:0007669"/>
    <property type="project" value="UniProtKB-UniRule"/>
</dbReference>
<dbReference type="GO" id="GO:0009045">
    <property type="term" value="F:xylose isomerase activity"/>
    <property type="evidence" value="ECO:0007669"/>
    <property type="project" value="UniProtKB-UniRule"/>
</dbReference>
<dbReference type="GO" id="GO:0042732">
    <property type="term" value="P:D-xylose metabolic process"/>
    <property type="evidence" value="ECO:0007669"/>
    <property type="project" value="UniProtKB-UniRule"/>
</dbReference>
<dbReference type="FunFam" id="3.20.20.150:FF:000002">
    <property type="entry name" value="Xylose isomerase"/>
    <property type="match status" value="1"/>
</dbReference>
<dbReference type="Gene3D" id="3.20.20.150">
    <property type="entry name" value="Divalent-metal-dependent TIM barrel enzymes"/>
    <property type="match status" value="1"/>
</dbReference>
<dbReference type="HAMAP" id="MF_00455">
    <property type="entry name" value="Xylose_isom_A"/>
    <property type="match status" value="1"/>
</dbReference>
<dbReference type="InterPro" id="IPR036237">
    <property type="entry name" value="Xyl_isomerase-like_sf"/>
</dbReference>
<dbReference type="InterPro" id="IPR013452">
    <property type="entry name" value="Xylose_isom_bac"/>
</dbReference>
<dbReference type="InterPro" id="IPR001998">
    <property type="entry name" value="Xylose_isomerase"/>
</dbReference>
<dbReference type="NCBIfam" id="NF003998">
    <property type="entry name" value="PRK05474.1"/>
    <property type="match status" value="1"/>
</dbReference>
<dbReference type="NCBIfam" id="TIGR02630">
    <property type="entry name" value="xylose_isom_A"/>
    <property type="match status" value="1"/>
</dbReference>
<dbReference type="PANTHER" id="PTHR48408">
    <property type="match status" value="1"/>
</dbReference>
<dbReference type="PANTHER" id="PTHR48408:SF1">
    <property type="entry name" value="XYLOSE ISOMERASE"/>
    <property type="match status" value="1"/>
</dbReference>
<dbReference type="PRINTS" id="PR00688">
    <property type="entry name" value="XYLOSISMRASE"/>
</dbReference>
<dbReference type="SUPFAM" id="SSF51658">
    <property type="entry name" value="Xylose isomerase-like"/>
    <property type="match status" value="1"/>
</dbReference>
<dbReference type="PROSITE" id="PS51415">
    <property type="entry name" value="XYLOSE_ISOMERASE"/>
    <property type="match status" value="1"/>
</dbReference>
<organism>
    <name type="scientific">Allorhizobium ampelinum (strain ATCC BAA-846 / DSM 112012 / S4)</name>
    <name type="common">Agrobacterium vitis (strain S4)</name>
    <dbReference type="NCBI Taxonomy" id="311402"/>
    <lineage>
        <taxon>Bacteria</taxon>
        <taxon>Pseudomonadati</taxon>
        <taxon>Pseudomonadota</taxon>
        <taxon>Alphaproteobacteria</taxon>
        <taxon>Hyphomicrobiales</taxon>
        <taxon>Rhizobiaceae</taxon>
        <taxon>Rhizobium/Agrobacterium group</taxon>
        <taxon>Allorhizobium</taxon>
        <taxon>Allorhizobium ampelinum</taxon>
    </lineage>
</organism>
<comment type="catalytic activity">
    <reaction evidence="1">
        <text>alpha-D-xylose = alpha-D-xylulofuranose</text>
        <dbReference type="Rhea" id="RHEA:22816"/>
        <dbReference type="ChEBI" id="CHEBI:28518"/>
        <dbReference type="ChEBI" id="CHEBI:188998"/>
        <dbReference type="EC" id="5.3.1.5"/>
    </reaction>
</comment>
<comment type="cofactor">
    <cofactor evidence="1">
        <name>Mg(2+)</name>
        <dbReference type="ChEBI" id="CHEBI:18420"/>
    </cofactor>
    <text evidence="1">Binds 2 magnesium ions per subunit.</text>
</comment>
<comment type="subunit">
    <text evidence="1">Homotetramer.</text>
</comment>
<comment type="subcellular location">
    <subcellularLocation>
        <location evidence="1">Cytoplasm</location>
    </subcellularLocation>
</comment>
<comment type="similarity">
    <text evidence="1">Belongs to the xylose isomerase family.</text>
</comment>
<accession>B9JSR6</accession>
<reference key="1">
    <citation type="journal article" date="2009" name="J. Bacteriol.">
        <title>Genome sequences of three Agrobacterium biovars help elucidate the evolution of multichromosome genomes in bacteria.</title>
        <authorList>
            <person name="Slater S.C."/>
            <person name="Goldman B.S."/>
            <person name="Goodner B."/>
            <person name="Setubal J.C."/>
            <person name="Farrand S.K."/>
            <person name="Nester E.W."/>
            <person name="Burr T.J."/>
            <person name="Banta L."/>
            <person name="Dickerman A.W."/>
            <person name="Paulsen I."/>
            <person name="Otten L."/>
            <person name="Suen G."/>
            <person name="Welch R."/>
            <person name="Almeida N.F."/>
            <person name="Arnold F."/>
            <person name="Burton O.T."/>
            <person name="Du Z."/>
            <person name="Ewing A."/>
            <person name="Godsy E."/>
            <person name="Heisel S."/>
            <person name="Houmiel K.L."/>
            <person name="Jhaveri J."/>
            <person name="Lu J."/>
            <person name="Miller N.M."/>
            <person name="Norton S."/>
            <person name="Chen Q."/>
            <person name="Phoolcharoen W."/>
            <person name="Ohlin V."/>
            <person name="Ondrusek D."/>
            <person name="Pride N."/>
            <person name="Stricklin S.L."/>
            <person name="Sun J."/>
            <person name="Wheeler C."/>
            <person name="Wilson L."/>
            <person name="Zhu H."/>
            <person name="Wood D.W."/>
        </authorList>
    </citation>
    <scope>NUCLEOTIDE SEQUENCE [LARGE SCALE GENOMIC DNA]</scope>
    <source>
        <strain>ATCC BAA-846 / DSM 112012 / S4</strain>
    </source>
</reference>
<proteinExistence type="inferred from homology"/>
<name>XYLA_ALLAM</name>
<evidence type="ECO:0000255" key="1">
    <source>
        <dbReference type="HAMAP-Rule" id="MF_00455"/>
    </source>
</evidence>
<sequence>MSTGFFGDITKIKYEGPDSTNPLAFRHYNPDEVVMGKRMEDHLRFAVAYWHTFVWPGTDPFGGNTFERPWFKDSMEAAKLKADVAFEFFQLLGTPYYCFHDADARPEGASFAENTKNLNEIVDYFAQKQADTGVKLLWGTANMFSHRRYMSGAATNPDPDVFAFAAATVKTCLDATQKLGGENYVLWGGREGYETLLNTDLKQELDHMGRFLNMVVEYKHKIGFKGAILIEPKPQEPSKHQYDYDVATVYGFLKTYGLEKEVKVNIEQGHAILAGHTFEHELALANALGIFGSIDMNRNDYQSGWDTDQFPNNVPEMALAYYQVLQAGGFTSGGTNFDSKLRRQSIDPADLLIGHIGGMDCCARGLKAAAKMVEDKALSGPLANRYAGWNSDGAKAMLASGTLESIAARVEGENINPQPVSGQQELLENVVNRYV</sequence>
<feature type="chain" id="PRO_1000200275" description="Xylose isomerase">
    <location>
        <begin position="1"/>
        <end position="435"/>
    </location>
</feature>
<feature type="binding site" evidence="1">
    <location>
        <position position="306"/>
    </location>
    <ligand>
        <name>Mg(2+)</name>
        <dbReference type="ChEBI" id="CHEBI:18420"/>
        <label>2</label>
    </ligand>
</feature>
<feature type="binding site" evidence="1">
    <location>
        <position position="308"/>
    </location>
    <ligand>
        <name>Mg(2+)</name>
        <dbReference type="ChEBI" id="CHEBI:18420"/>
        <label>2</label>
    </ligand>
</feature>
<protein>
    <recommendedName>
        <fullName evidence="1">Xylose isomerase</fullName>
        <ecNumber evidence="1">5.3.1.5</ecNumber>
    </recommendedName>
</protein>
<keyword id="KW-0119">Carbohydrate metabolism</keyword>
<keyword id="KW-0963">Cytoplasm</keyword>
<keyword id="KW-0413">Isomerase</keyword>
<keyword id="KW-0460">Magnesium</keyword>
<keyword id="KW-0479">Metal-binding</keyword>
<keyword id="KW-1185">Reference proteome</keyword>
<keyword id="KW-0859">Xylose metabolism</keyword>
<gene>
    <name evidence="1" type="primary">xylA</name>
    <name type="ordered locus">Avi_3832</name>
</gene>